<accession>P16925</accession>
<proteinExistence type="evidence at transcript level"/>
<protein>
    <recommendedName>
        <fullName>Conjugation stage-specific protein</fullName>
    </recommendedName>
</protein>
<feature type="chain" id="PRO_0000132749" description="Conjugation stage-specific protein">
    <location>
        <begin position="1"/>
        <end position="310"/>
    </location>
</feature>
<comment type="function">
    <text>May be a stage-specific RNA polymerase subunit.</text>
</comment>
<comment type="subcellular location">
    <subcellularLocation>
        <location>Nucleus</location>
    </subcellularLocation>
</comment>
<comment type="developmental stage">
    <text>Sexual stage (conjugation) of life cycle.</text>
</comment>
<comment type="similarity">
    <text evidence="1">Belongs to the archaeal Rpo3/eukaryotic RPB3 RNA polymerase subunit family.</text>
</comment>
<gene>
    <name type="primary">CNJC</name>
</gene>
<evidence type="ECO:0000305" key="1"/>
<dbReference type="EMBL" id="X62317">
    <property type="protein sequence ID" value="CAA44194.1"/>
    <property type="molecule type" value="mRNA"/>
</dbReference>
<dbReference type="PIR" id="S12807">
    <property type="entry name" value="S12807"/>
</dbReference>
<dbReference type="SMR" id="P16925"/>
<dbReference type="OMA" id="FYFEVES"/>
<dbReference type="GO" id="GO:0005665">
    <property type="term" value="C:RNA polymerase II, core complex"/>
    <property type="evidence" value="ECO:0007669"/>
    <property type="project" value="TreeGrafter"/>
</dbReference>
<dbReference type="GO" id="GO:0003677">
    <property type="term" value="F:DNA binding"/>
    <property type="evidence" value="ECO:0007669"/>
    <property type="project" value="InterPro"/>
</dbReference>
<dbReference type="GO" id="GO:0003899">
    <property type="term" value="F:DNA-directed RNA polymerase activity"/>
    <property type="evidence" value="ECO:0007669"/>
    <property type="project" value="InterPro"/>
</dbReference>
<dbReference type="GO" id="GO:0046983">
    <property type="term" value="F:protein dimerization activity"/>
    <property type="evidence" value="ECO:0007669"/>
    <property type="project" value="InterPro"/>
</dbReference>
<dbReference type="GO" id="GO:0006366">
    <property type="term" value="P:transcription by RNA polymerase II"/>
    <property type="evidence" value="ECO:0007669"/>
    <property type="project" value="TreeGrafter"/>
</dbReference>
<dbReference type="CDD" id="cd07031">
    <property type="entry name" value="RNAP_II_RPB3"/>
    <property type="match status" value="1"/>
</dbReference>
<dbReference type="Gene3D" id="2.170.120.12">
    <property type="entry name" value="DNA-directed RNA polymerase, insert domain"/>
    <property type="match status" value="1"/>
</dbReference>
<dbReference type="Gene3D" id="3.30.1360.10">
    <property type="entry name" value="RNA polymerase, RBP11-like subunit"/>
    <property type="match status" value="1"/>
</dbReference>
<dbReference type="HAMAP" id="MF_00320">
    <property type="entry name" value="RNApol_arch_Rpo3"/>
    <property type="match status" value="1"/>
</dbReference>
<dbReference type="InterPro" id="IPR001514">
    <property type="entry name" value="DNA-dir_RNA_pol_30-40kDasu_CS"/>
</dbReference>
<dbReference type="InterPro" id="IPR011262">
    <property type="entry name" value="DNA-dir_RNA_pol_insert"/>
</dbReference>
<dbReference type="InterPro" id="IPR011263">
    <property type="entry name" value="DNA-dir_RNA_pol_RpoA/D/Rpb3"/>
</dbReference>
<dbReference type="InterPro" id="IPR036603">
    <property type="entry name" value="RBP11-like"/>
</dbReference>
<dbReference type="InterPro" id="IPR022842">
    <property type="entry name" value="RNAP_Rpo3/Rpb3/RPAC1"/>
</dbReference>
<dbReference type="InterPro" id="IPR036643">
    <property type="entry name" value="RNApol_insert_sf"/>
</dbReference>
<dbReference type="InterPro" id="IPR050518">
    <property type="entry name" value="Rpo3/RPB3_RNA_Pol_subunit"/>
</dbReference>
<dbReference type="NCBIfam" id="NF001988">
    <property type="entry name" value="PRK00783.1"/>
    <property type="match status" value="1"/>
</dbReference>
<dbReference type="PANTHER" id="PTHR11800">
    <property type="entry name" value="DNA-DIRECTED RNA POLYMERASE"/>
    <property type="match status" value="1"/>
</dbReference>
<dbReference type="PANTHER" id="PTHR11800:SF2">
    <property type="entry name" value="DNA-DIRECTED RNA POLYMERASE II SUBUNIT RPB3"/>
    <property type="match status" value="1"/>
</dbReference>
<dbReference type="Pfam" id="PF01000">
    <property type="entry name" value="RNA_pol_A_bac"/>
    <property type="match status" value="1"/>
</dbReference>
<dbReference type="Pfam" id="PF01193">
    <property type="entry name" value="RNA_pol_L"/>
    <property type="match status" value="1"/>
</dbReference>
<dbReference type="SMART" id="SM00662">
    <property type="entry name" value="RPOLD"/>
    <property type="match status" value="1"/>
</dbReference>
<dbReference type="SUPFAM" id="SSF56553">
    <property type="entry name" value="Insert subdomain of RNA polymerase alpha subunit"/>
    <property type="match status" value="1"/>
</dbReference>
<dbReference type="SUPFAM" id="SSF55257">
    <property type="entry name" value="RBP11-like subunits of RNA polymerase"/>
    <property type="match status" value="1"/>
</dbReference>
<dbReference type="PROSITE" id="PS00446">
    <property type="entry name" value="RNA_POL_D_30KD"/>
    <property type="match status" value="1"/>
</dbReference>
<name>CNJC_TETTH</name>
<organism>
    <name type="scientific">Tetrahymena thermophila</name>
    <dbReference type="NCBI Taxonomy" id="5911"/>
    <lineage>
        <taxon>Eukaryota</taxon>
        <taxon>Sar</taxon>
        <taxon>Alveolata</taxon>
        <taxon>Ciliophora</taxon>
        <taxon>Intramacronucleata</taxon>
        <taxon>Oligohymenophorea</taxon>
        <taxon>Hymenostomatida</taxon>
        <taxon>Tetrahymenina</taxon>
        <taxon>Tetrahymenidae</taxon>
        <taxon>Tetrahymena</taxon>
    </lineage>
</organism>
<reference key="1">
    <citation type="journal article" date="1990" name="Nucleic Acids Res.">
        <title>A conjugation-specific gene (cnjC) from Tetrahymena encodes a protein homologous to yeast RNA polymerase subunits (RPB3, RPC40) and similar to a portion of the prokaryotic RNA polymerase alpha subunit (rpoA).</title>
        <authorList>
            <person name="Martindale D.W."/>
        </authorList>
    </citation>
    <scope>NUCLEOTIDE SEQUENCE [MRNA]</scope>
    <source>
        <strain>B</strain>
    </source>
</reference>
<sequence length="310" mass="36042">MEGIKLTLTNLEEFKCEFTLENCDISLANSLRRILLAEIETIAIHNVKVYENTSSLPDEYIAHRLGLIPLNSAKVDDYNYIWNCNCQGECDRCTIHFDLRVSNFTNEVLEVTSLDLKQRQDHTDEDAVRPIKVYSILRDEYGNKREVGIPIIKLSKGQQIHFECEAQKGIGKMHSKWNPVCISTFSVEPEIIFDQEIQNLDIEQKKALVNACPTKVFGINPHTNTLEVQDHMKCMYCEECVYKCAEDFQKPKLIKIDHKKDKFFFKVETTGVMKPVEVLRRGFSTLRQKLDFMREQIQENSNNQFEYGNE</sequence>
<keyword id="KW-0240">DNA-directed RNA polymerase</keyword>
<keyword id="KW-0548">Nucleotidyltransferase</keyword>
<keyword id="KW-0539">Nucleus</keyword>
<keyword id="KW-0804">Transcription</keyword>
<keyword id="KW-0808">Transferase</keyword>